<keyword id="KW-0131">Cell cycle</keyword>
<keyword id="KW-0132">Cell division</keyword>
<keyword id="KW-0143">Chaperone</keyword>
<keyword id="KW-0963">Cytoplasm</keyword>
<keyword id="KW-0413">Isomerase</keyword>
<keyword id="KW-0697">Rotamase</keyword>
<organism>
    <name type="scientific">Chlorobaculum parvum (strain DSM 263 / NCIMB 8327)</name>
    <name type="common">Chlorobium vibrioforme subsp. thiosulfatophilum</name>
    <dbReference type="NCBI Taxonomy" id="517417"/>
    <lineage>
        <taxon>Bacteria</taxon>
        <taxon>Pseudomonadati</taxon>
        <taxon>Chlorobiota</taxon>
        <taxon>Chlorobiia</taxon>
        <taxon>Chlorobiales</taxon>
        <taxon>Chlorobiaceae</taxon>
        <taxon>Chlorobaculum</taxon>
    </lineage>
</organism>
<evidence type="ECO:0000255" key="1">
    <source>
        <dbReference type="HAMAP-Rule" id="MF_00303"/>
    </source>
</evidence>
<name>TIG_CHLP8</name>
<comment type="function">
    <text evidence="1">Involved in protein export. Acts as a chaperone by maintaining the newly synthesized protein in an open conformation. Functions as a peptidyl-prolyl cis-trans isomerase.</text>
</comment>
<comment type="catalytic activity">
    <reaction evidence="1">
        <text>[protein]-peptidylproline (omega=180) = [protein]-peptidylproline (omega=0)</text>
        <dbReference type="Rhea" id="RHEA:16237"/>
        <dbReference type="Rhea" id="RHEA-COMP:10747"/>
        <dbReference type="Rhea" id="RHEA-COMP:10748"/>
        <dbReference type="ChEBI" id="CHEBI:83833"/>
        <dbReference type="ChEBI" id="CHEBI:83834"/>
        <dbReference type="EC" id="5.2.1.8"/>
    </reaction>
</comment>
<comment type="subcellular location">
    <subcellularLocation>
        <location>Cytoplasm</location>
    </subcellularLocation>
    <text evidence="1">About half TF is bound to the ribosome near the polypeptide exit tunnel while the other half is free in the cytoplasm.</text>
</comment>
<comment type="domain">
    <text evidence="1">Consists of 3 domains; the N-terminus binds the ribosome, the middle domain has PPIase activity, while the C-terminus has intrinsic chaperone activity on its own.</text>
</comment>
<comment type="similarity">
    <text evidence="1">Belongs to the FKBP-type PPIase family. Tig subfamily.</text>
</comment>
<gene>
    <name evidence="1" type="primary">tig</name>
    <name type="ordered locus">Cpar_0278</name>
</gene>
<accession>B3QQT5</accession>
<proteinExistence type="inferred from homology"/>
<reference key="1">
    <citation type="submission" date="2008-06" db="EMBL/GenBank/DDBJ databases">
        <title>Complete sequence of Chlorobaculum parvum NCIB 8327.</title>
        <authorList>
            <consortium name="US DOE Joint Genome Institute"/>
            <person name="Lucas S."/>
            <person name="Copeland A."/>
            <person name="Lapidus A."/>
            <person name="Glavina del Rio T."/>
            <person name="Dalin E."/>
            <person name="Tice H."/>
            <person name="Bruce D."/>
            <person name="Goodwin L."/>
            <person name="Pitluck S."/>
            <person name="Schmutz J."/>
            <person name="Larimer F."/>
            <person name="Land M."/>
            <person name="Hauser L."/>
            <person name="Kyrpides N."/>
            <person name="Mikhailova N."/>
            <person name="Zhao F."/>
            <person name="Li T."/>
            <person name="Liu Z."/>
            <person name="Overmann J."/>
            <person name="Bryant D.A."/>
            <person name="Richardson P."/>
        </authorList>
    </citation>
    <scope>NUCLEOTIDE SEQUENCE [LARGE SCALE GENOMIC DNA]</scope>
    <source>
        <strain>DSM 263 / NCIMB 8327</strain>
    </source>
</reference>
<dbReference type="EC" id="5.2.1.8" evidence="1"/>
<dbReference type="EMBL" id="CP001099">
    <property type="protein sequence ID" value="ACF10705.1"/>
    <property type="molecule type" value="Genomic_DNA"/>
</dbReference>
<dbReference type="RefSeq" id="WP_012501538.1">
    <property type="nucleotide sequence ID" value="NC_011027.1"/>
</dbReference>
<dbReference type="SMR" id="B3QQT5"/>
<dbReference type="STRING" id="517417.Cpar_0278"/>
<dbReference type="KEGG" id="cpc:Cpar_0278"/>
<dbReference type="eggNOG" id="COG0544">
    <property type="taxonomic scope" value="Bacteria"/>
</dbReference>
<dbReference type="HOGENOM" id="CLU_033058_3_1_10"/>
<dbReference type="OrthoDB" id="9767721at2"/>
<dbReference type="Proteomes" id="UP000008811">
    <property type="component" value="Chromosome"/>
</dbReference>
<dbReference type="GO" id="GO:0005737">
    <property type="term" value="C:cytoplasm"/>
    <property type="evidence" value="ECO:0007669"/>
    <property type="project" value="UniProtKB-SubCell"/>
</dbReference>
<dbReference type="GO" id="GO:0003755">
    <property type="term" value="F:peptidyl-prolyl cis-trans isomerase activity"/>
    <property type="evidence" value="ECO:0007669"/>
    <property type="project" value="UniProtKB-UniRule"/>
</dbReference>
<dbReference type="GO" id="GO:0044183">
    <property type="term" value="F:protein folding chaperone"/>
    <property type="evidence" value="ECO:0007669"/>
    <property type="project" value="TreeGrafter"/>
</dbReference>
<dbReference type="GO" id="GO:0043022">
    <property type="term" value="F:ribosome binding"/>
    <property type="evidence" value="ECO:0007669"/>
    <property type="project" value="TreeGrafter"/>
</dbReference>
<dbReference type="GO" id="GO:0051083">
    <property type="term" value="P:'de novo' cotranslational protein folding"/>
    <property type="evidence" value="ECO:0007669"/>
    <property type="project" value="TreeGrafter"/>
</dbReference>
<dbReference type="GO" id="GO:0051301">
    <property type="term" value="P:cell division"/>
    <property type="evidence" value="ECO:0007669"/>
    <property type="project" value="UniProtKB-KW"/>
</dbReference>
<dbReference type="GO" id="GO:0061077">
    <property type="term" value="P:chaperone-mediated protein folding"/>
    <property type="evidence" value="ECO:0007669"/>
    <property type="project" value="TreeGrafter"/>
</dbReference>
<dbReference type="GO" id="GO:0015031">
    <property type="term" value="P:protein transport"/>
    <property type="evidence" value="ECO:0007669"/>
    <property type="project" value="UniProtKB-UniRule"/>
</dbReference>
<dbReference type="GO" id="GO:0043335">
    <property type="term" value="P:protein unfolding"/>
    <property type="evidence" value="ECO:0007669"/>
    <property type="project" value="TreeGrafter"/>
</dbReference>
<dbReference type="Gene3D" id="3.10.50.40">
    <property type="match status" value="1"/>
</dbReference>
<dbReference type="Gene3D" id="3.30.70.1050">
    <property type="entry name" value="Trigger factor ribosome-binding domain"/>
    <property type="match status" value="1"/>
</dbReference>
<dbReference type="Gene3D" id="1.10.3120.10">
    <property type="entry name" value="Trigger factor, C-terminal domain"/>
    <property type="match status" value="1"/>
</dbReference>
<dbReference type="HAMAP" id="MF_00303">
    <property type="entry name" value="Trigger_factor_Tig"/>
    <property type="match status" value="1"/>
</dbReference>
<dbReference type="InterPro" id="IPR046357">
    <property type="entry name" value="PPIase_dom_sf"/>
</dbReference>
<dbReference type="InterPro" id="IPR005215">
    <property type="entry name" value="Trig_fac"/>
</dbReference>
<dbReference type="InterPro" id="IPR008880">
    <property type="entry name" value="Trigger_fac_C"/>
</dbReference>
<dbReference type="InterPro" id="IPR037041">
    <property type="entry name" value="Trigger_fac_C_sf"/>
</dbReference>
<dbReference type="InterPro" id="IPR008881">
    <property type="entry name" value="Trigger_fac_ribosome-bd_bac"/>
</dbReference>
<dbReference type="InterPro" id="IPR036611">
    <property type="entry name" value="Trigger_fac_ribosome-bd_sf"/>
</dbReference>
<dbReference type="InterPro" id="IPR027304">
    <property type="entry name" value="Trigger_fact/SurA_dom_sf"/>
</dbReference>
<dbReference type="NCBIfam" id="TIGR00115">
    <property type="entry name" value="tig"/>
    <property type="match status" value="1"/>
</dbReference>
<dbReference type="PANTHER" id="PTHR30560">
    <property type="entry name" value="TRIGGER FACTOR CHAPERONE AND PEPTIDYL-PROLYL CIS/TRANS ISOMERASE"/>
    <property type="match status" value="1"/>
</dbReference>
<dbReference type="PANTHER" id="PTHR30560:SF3">
    <property type="entry name" value="TRIGGER FACTOR-LIKE PROTEIN TIG, CHLOROPLASTIC"/>
    <property type="match status" value="1"/>
</dbReference>
<dbReference type="Pfam" id="PF05698">
    <property type="entry name" value="Trigger_C"/>
    <property type="match status" value="1"/>
</dbReference>
<dbReference type="Pfam" id="PF05697">
    <property type="entry name" value="Trigger_N"/>
    <property type="match status" value="1"/>
</dbReference>
<dbReference type="PIRSF" id="PIRSF003095">
    <property type="entry name" value="Trigger_factor"/>
    <property type="match status" value="1"/>
</dbReference>
<dbReference type="SUPFAM" id="SSF54534">
    <property type="entry name" value="FKBP-like"/>
    <property type="match status" value="1"/>
</dbReference>
<dbReference type="SUPFAM" id="SSF109998">
    <property type="entry name" value="Triger factor/SurA peptide-binding domain-like"/>
    <property type="match status" value="1"/>
</dbReference>
<dbReference type="SUPFAM" id="SSF102735">
    <property type="entry name" value="Trigger factor ribosome-binding domain"/>
    <property type="match status" value="1"/>
</dbReference>
<feature type="chain" id="PRO_1000115515" description="Trigger factor">
    <location>
        <begin position="1"/>
        <end position="427"/>
    </location>
</feature>
<feature type="domain" description="PPIase FKBP-type" evidence="1">
    <location>
        <begin position="160"/>
        <end position="240"/>
    </location>
</feature>
<protein>
    <recommendedName>
        <fullName evidence="1">Trigger factor</fullName>
        <shortName evidence="1">TF</shortName>
        <ecNumber evidence="1">5.2.1.8</ecNumber>
    </recommendedName>
    <alternativeName>
        <fullName evidence="1">PPIase</fullName>
    </alternativeName>
</protein>
<sequence length="427" mass="48346">MQKNITNVSDTEQQLEIILTAEEYQPEYDQQLEEARRSIKIKGFRQGHVPVGMLKKMIGPSLEAEVAEKMASKHFSAIADEEKINPASRAQIDSFNFGDGELTIKISYEIHPEFELKDLSAYSFTQAEYSVTDEDVEREIKLILKGHGTMVTIEEAAGEGDTLIGDVTKLDADGNAVENGKNENHHFNLEYLPADNPFRMALEGRKAGDSVEVNVEPKEEGGEAIRYRVDVKEVKRLELPELDDELVKEITQQRFENVTDFKADVKLQLQAHFTDKSEQDLLEAMSAKLIEEHPVPTPKAMVASFQNMLLENAKRQMGGQFPKSLNEAEFLETLKPNAEKHARWLLVSQKIAKENELNVTDEDIKAYAEKEAEKEPSLTVEQLVSTYMSTEFKDYIIDTILKEKIYDVIKSKVTITKEATPIPEHQG</sequence>